<protein>
    <recommendedName>
        <fullName evidence="1">UvrABC system protein C</fullName>
        <shortName evidence="1">Protein UvrC</shortName>
    </recommendedName>
    <alternativeName>
        <fullName evidence="1">Excinuclease ABC subunit C</fullName>
    </alternativeName>
</protein>
<keyword id="KW-0963">Cytoplasm</keyword>
<keyword id="KW-0227">DNA damage</keyword>
<keyword id="KW-0228">DNA excision</keyword>
<keyword id="KW-0234">DNA repair</keyword>
<keyword id="KW-0267">Excision nuclease</keyword>
<keyword id="KW-1185">Reference proteome</keyword>
<keyword id="KW-0742">SOS response</keyword>
<reference key="1">
    <citation type="journal article" date="2002" name="Proc. Natl. Acad. Sci. U.S.A.">
        <title>Genome sequence of Streptococcus mutans UA159, a cariogenic dental pathogen.</title>
        <authorList>
            <person name="Ajdic D.J."/>
            <person name="McShan W.M."/>
            <person name="McLaughlin R.E."/>
            <person name="Savic G."/>
            <person name="Chang J."/>
            <person name="Carson M.B."/>
            <person name="Primeaux C."/>
            <person name="Tian R."/>
            <person name="Kenton S."/>
            <person name="Jia H.G."/>
            <person name="Lin S.P."/>
            <person name="Qian Y."/>
            <person name="Li S."/>
            <person name="Zhu H."/>
            <person name="Najar F.Z."/>
            <person name="Lai H."/>
            <person name="White J."/>
            <person name="Roe B.A."/>
            <person name="Ferretti J.J."/>
        </authorList>
    </citation>
    <scope>NUCLEOTIDE SEQUENCE [LARGE SCALE GENOMIC DNA]</scope>
    <source>
        <strain>ATCC 700610 / UA159</strain>
    </source>
</reference>
<feature type="chain" id="PRO_0000264957" description="UvrABC system protein C">
    <location>
        <begin position="1"/>
        <end position="595"/>
    </location>
</feature>
<feature type="domain" description="GIY-YIG" evidence="1">
    <location>
        <begin position="14"/>
        <end position="91"/>
    </location>
</feature>
<feature type="domain" description="UVR" evidence="1">
    <location>
        <begin position="196"/>
        <end position="231"/>
    </location>
</feature>
<sequence>MNELIKHKLELLPDSPGCYIHKDKNGTIIYVGKAKNLKNRVRSYFHGSHNTKTELLVSEIEDFEYIVTGSNTEALLLEINLIQENKPKYNIRLKDDKSYPFIKITNEPYPRLLITRQVKKDGGLYFGPYPDSGAATEIKRLLDRLFPFKKCTNPANKVCFYYHLGQCKAHTICQTDQTYWDSLKEDVKNFLNGRDDKIVNELRDKMTKASELMEFERAAEYRDLIEGIGLLRTKQRVMNQDMQDRDIFGYYVDKGWMCVQVFFIRQGKLIQRDVNMFPYYNESEEDFLTYVGQFYQDNRHFIPKEIFIPRNIDETLVKAVVNTKIIKPQRGEKKQLVNLATKNARVSLQQKFDLLEKDIRKTHGAIENIGDLLNIPKPVRIEAFDNSNIQGTSPVAAMVVFVDGKPSKKDYRKFKIKTVIGPDDYASMREVIYRRYSRVMRDGLTPPDLIIIDGGQGQVNVARDVIENKLGLDIPIAGLQKNDKHQTHELLFGDPLEVIPLPRNSEEFFLLQRIQDEVHRFAITFHRQLRGKNTFSSKLNGIAGLGPKRKQLLMKHFKNLPNIQKASLDDIINCGIPKNVAENIQESLREEREKG</sequence>
<accession>Q8CWX4</accession>
<gene>
    <name evidence="1" type="primary">uvrC</name>
    <name type="ordered locus">SMU_1241</name>
</gene>
<proteinExistence type="inferred from homology"/>
<evidence type="ECO:0000255" key="1">
    <source>
        <dbReference type="HAMAP-Rule" id="MF_00203"/>
    </source>
</evidence>
<organism>
    <name type="scientific">Streptococcus mutans serotype c (strain ATCC 700610 / UA159)</name>
    <dbReference type="NCBI Taxonomy" id="210007"/>
    <lineage>
        <taxon>Bacteria</taxon>
        <taxon>Bacillati</taxon>
        <taxon>Bacillota</taxon>
        <taxon>Bacilli</taxon>
        <taxon>Lactobacillales</taxon>
        <taxon>Streptococcaceae</taxon>
        <taxon>Streptococcus</taxon>
    </lineage>
</organism>
<comment type="function">
    <text evidence="1">The UvrABC repair system catalyzes the recognition and processing of DNA lesions. UvrC both incises the 5' and 3' sides of the lesion. The N-terminal half is responsible for the 3' incision and the C-terminal half is responsible for the 5' incision.</text>
</comment>
<comment type="subunit">
    <text evidence="1">Interacts with UvrB in an incision complex.</text>
</comment>
<comment type="subcellular location">
    <subcellularLocation>
        <location evidence="1">Cytoplasm</location>
    </subcellularLocation>
</comment>
<comment type="similarity">
    <text evidence="1">Belongs to the UvrC family.</text>
</comment>
<name>UVRC_STRMU</name>
<dbReference type="EMBL" id="AE014133">
    <property type="protein sequence ID" value="AAN58926.1"/>
    <property type="molecule type" value="Genomic_DNA"/>
</dbReference>
<dbReference type="RefSeq" id="NP_721620.1">
    <property type="nucleotide sequence ID" value="NC_004350.2"/>
</dbReference>
<dbReference type="RefSeq" id="WP_002263201.1">
    <property type="nucleotide sequence ID" value="NC_004350.2"/>
</dbReference>
<dbReference type="SMR" id="Q8CWX4"/>
<dbReference type="STRING" id="210007.SMU_1241"/>
<dbReference type="GeneID" id="93859278"/>
<dbReference type="KEGG" id="smu:SMU_1241"/>
<dbReference type="PATRIC" id="fig|210007.7.peg.1113"/>
<dbReference type="eggNOG" id="COG0322">
    <property type="taxonomic scope" value="Bacteria"/>
</dbReference>
<dbReference type="HOGENOM" id="CLU_014841_3_2_9"/>
<dbReference type="OrthoDB" id="9804933at2"/>
<dbReference type="PhylomeDB" id="Q8CWX4"/>
<dbReference type="Proteomes" id="UP000002512">
    <property type="component" value="Chromosome"/>
</dbReference>
<dbReference type="GO" id="GO:0005737">
    <property type="term" value="C:cytoplasm"/>
    <property type="evidence" value="ECO:0007669"/>
    <property type="project" value="UniProtKB-SubCell"/>
</dbReference>
<dbReference type="GO" id="GO:0009380">
    <property type="term" value="C:excinuclease repair complex"/>
    <property type="evidence" value="ECO:0007669"/>
    <property type="project" value="InterPro"/>
</dbReference>
<dbReference type="GO" id="GO:0003677">
    <property type="term" value="F:DNA binding"/>
    <property type="evidence" value="ECO:0007669"/>
    <property type="project" value="UniProtKB-UniRule"/>
</dbReference>
<dbReference type="GO" id="GO:0009381">
    <property type="term" value="F:excinuclease ABC activity"/>
    <property type="evidence" value="ECO:0007669"/>
    <property type="project" value="UniProtKB-UniRule"/>
</dbReference>
<dbReference type="GO" id="GO:0006289">
    <property type="term" value="P:nucleotide-excision repair"/>
    <property type="evidence" value="ECO:0007669"/>
    <property type="project" value="UniProtKB-UniRule"/>
</dbReference>
<dbReference type="GO" id="GO:0009432">
    <property type="term" value="P:SOS response"/>
    <property type="evidence" value="ECO:0007669"/>
    <property type="project" value="UniProtKB-UniRule"/>
</dbReference>
<dbReference type="CDD" id="cd10434">
    <property type="entry name" value="GIY-YIG_UvrC_Cho"/>
    <property type="match status" value="1"/>
</dbReference>
<dbReference type="FunFam" id="3.30.420.340:FF:000002">
    <property type="entry name" value="UvrABC system protein C"/>
    <property type="match status" value="1"/>
</dbReference>
<dbReference type="FunFam" id="3.40.1440.10:FF:000001">
    <property type="entry name" value="UvrABC system protein C"/>
    <property type="match status" value="1"/>
</dbReference>
<dbReference type="Gene3D" id="1.10.150.20">
    <property type="entry name" value="5' to 3' exonuclease, C-terminal subdomain"/>
    <property type="match status" value="1"/>
</dbReference>
<dbReference type="Gene3D" id="3.40.1440.10">
    <property type="entry name" value="GIY-YIG endonuclease"/>
    <property type="match status" value="1"/>
</dbReference>
<dbReference type="Gene3D" id="4.10.860.10">
    <property type="entry name" value="UVR domain"/>
    <property type="match status" value="1"/>
</dbReference>
<dbReference type="Gene3D" id="3.30.420.340">
    <property type="entry name" value="UvrC, RNAse H endonuclease domain"/>
    <property type="match status" value="1"/>
</dbReference>
<dbReference type="HAMAP" id="MF_00203">
    <property type="entry name" value="UvrC"/>
    <property type="match status" value="1"/>
</dbReference>
<dbReference type="InterPro" id="IPR000305">
    <property type="entry name" value="GIY-YIG_endonuc"/>
</dbReference>
<dbReference type="InterPro" id="IPR035901">
    <property type="entry name" value="GIY-YIG_endonuc_sf"/>
</dbReference>
<dbReference type="InterPro" id="IPR047296">
    <property type="entry name" value="GIY-YIG_UvrC_Cho"/>
</dbReference>
<dbReference type="InterPro" id="IPR010994">
    <property type="entry name" value="RuvA_2-like"/>
</dbReference>
<dbReference type="InterPro" id="IPR001943">
    <property type="entry name" value="UVR_dom"/>
</dbReference>
<dbReference type="InterPro" id="IPR036876">
    <property type="entry name" value="UVR_dom_sf"/>
</dbReference>
<dbReference type="InterPro" id="IPR050066">
    <property type="entry name" value="UvrABC_protein_C"/>
</dbReference>
<dbReference type="InterPro" id="IPR004791">
    <property type="entry name" value="UvrC"/>
</dbReference>
<dbReference type="InterPro" id="IPR001162">
    <property type="entry name" value="UvrC_RNase_H_dom"/>
</dbReference>
<dbReference type="InterPro" id="IPR038476">
    <property type="entry name" value="UvrC_RNase_H_dom_sf"/>
</dbReference>
<dbReference type="NCBIfam" id="TIGR00194">
    <property type="entry name" value="uvrC"/>
    <property type="match status" value="1"/>
</dbReference>
<dbReference type="PANTHER" id="PTHR30562:SF1">
    <property type="entry name" value="UVRABC SYSTEM PROTEIN C"/>
    <property type="match status" value="1"/>
</dbReference>
<dbReference type="PANTHER" id="PTHR30562">
    <property type="entry name" value="UVRC/OXIDOREDUCTASE"/>
    <property type="match status" value="1"/>
</dbReference>
<dbReference type="Pfam" id="PF01541">
    <property type="entry name" value="GIY-YIG"/>
    <property type="match status" value="1"/>
</dbReference>
<dbReference type="Pfam" id="PF02151">
    <property type="entry name" value="UVR"/>
    <property type="match status" value="1"/>
</dbReference>
<dbReference type="Pfam" id="PF22920">
    <property type="entry name" value="UvrC_RNaseH"/>
    <property type="match status" value="1"/>
</dbReference>
<dbReference type="Pfam" id="PF08459">
    <property type="entry name" value="UvrC_RNaseH_dom"/>
    <property type="match status" value="1"/>
</dbReference>
<dbReference type="SMART" id="SM00465">
    <property type="entry name" value="GIYc"/>
    <property type="match status" value="1"/>
</dbReference>
<dbReference type="SUPFAM" id="SSF46600">
    <property type="entry name" value="C-terminal UvrC-binding domain of UvrB"/>
    <property type="match status" value="1"/>
</dbReference>
<dbReference type="SUPFAM" id="SSF82771">
    <property type="entry name" value="GIY-YIG endonuclease"/>
    <property type="match status" value="1"/>
</dbReference>
<dbReference type="SUPFAM" id="SSF47781">
    <property type="entry name" value="RuvA domain 2-like"/>
    <property type="match status" value="1"/>
</dbReference>
<dbReference type="PROSITE" id="PS50164">
    <property type="entry name" value="GIY_YIG"/>
    <property type="match status" value="1"/>
</dbReference>
<dbReference type="PROSITE" id="PS50151">
    <property type="entry name" value="UVR"/>
    <property type="match status" value="1"/>
</dbReference>
<dbReference type="PROSITE" id="PS50165">
    <property type="entry name" value="UVRC"/>
    <property type="match status" value="1"/>
</dbReference>